<gene>
    <name evidence="1" type="primary">gatA</name>
    <name type="ordered locus">CLH_0398</name>
</gene>
<name>GATA_CLOBA</name>
<dbReference type="EC" id="6.3.5.7" evidence="1"/>
<dbReference type="EMBL" id="CP001078">
    <property type="protein sequence ID" value="ACD51059.1"/>
    <property type="molecule type" value="Genomic_DNA"/>
</dbReference>
<dbReference type="RefSeq" id="WP_012449500.1">
    <property type="nucleotide sequence ID" value="NC_010723.1"/>
</dbReference>
<dbReference type="SMR" id="B2UZ26"/>
<dbReference type="KEGG" id="cbt:CLH_0398"/>
<dbReference type="HOGENOM" id="CLU_009600_0_3_9"/>
<dbReference type="GO" id="GO:0030956">
    <property type="term" value="C:glutamyl-tRNA(Gln) amidotransferase complex"/>
    <property type="evidence" value="ECO:0007669"/>
    <property type="project" value="InterPro"/>
</dbReference>
<dbReference type="GO" id="GO:0005524">
    <property type="term" value="F:ATP binding"/>
    <property type="evidence" value="ECO:0007669"/>
    <property type="project" value="UniProtKB-KW"/>
</dbReference>
<dbReference type="GO" id="GO:0050567">
    <property type="term" value="F:glutaminyl-tRNA synthase (glutamine-hydrolyzing) activity"/>
    <property type="evidence" value="ECO:0007669"/>
    <property type="project" value="UniProtKB-UniRule"/>
</dbReference>
<dbReference type="GO" id="GO:0006412">
    <property type="term" value="P:translation"/>
    <property type="evidence" value="ECO:0007669"/>
    <property type="project" value="UniProtKB-UniRule"/>
</dbReference>
<dbReference type="Gene3D" id="3.90.1300.10">
    <property type="entry name" value="Amidase signature (AS) domain"/>
    <property type="match status" value="1"/>
</dbReference>
<dbReference type="HAMAP" id="MF_00120">
    <property type="entry name" value="GatA"/>
    <property type="match status" value="1"/>
</dbReference>
<dbReference type="InterPro" id="IPR000120">
    <property type="entry name" value="Amidase"/>
</dbReference>
<dbReference type="InterPro" id="IPR020556">
    <property type="entry name" value="Amidase_CS"/>
</dbReference>
<dbReference type="InterPro" id="IPR023631">
    <property type="entry name" value="Amidase_dom"/>
</dbReference>
<dbReference type="InterPro" id="IPR036928">
    <property type="entry name" value="AS_sf"/>
</dbReference>
<dbReference type="InterPro" id="IPR004412">
    <property type="entry name" value="GatA"/>
</dbReference>
<dbReference type="NCBIfam" id="TIGR00132">
    <property type="entry name" value="gatA"/>
    <property type="match status" value="1"/>
</dbReference>
<dbReference type="PANTHER" id="PTHR11895:SF151">
    <property type="entry name" value="GLUTAMYL-TRNA(GLN) AMIDOTRANSFERASE SUBUNIT A"/>
    <property type="match status" value="1"/>
</dbReference>
<dbReference type="PANTHER" id="PTHR11895">
    <property type="entry name" value="TRANSAMIDASE"/>
    <property type="match status" value="1"/>
</dbReference>
<dbReference type="Pfam" id="PF01425">
    <property type="entry name" value="Amidase"/>
    <property type="match status" value="1"/>
</dbReference>
<dbReference type="SUPFAM" id="SSF75304">
    <property type="entry name" value="Amidase signature (AS) enzymes"/>
    <property type="match status" value="1"/>
</dbReference>
<dbReference type="PROSITE" id="PS00571">
    <property type="entry name" value="AMIDASES"/>
    <property type="match status" value="1"/>
</dbReference>
<accession>B2UZ26</accession>
<evidence type="ECO:0000255" key="1">
    <source>
        <dbReference type="HAMAP-Rule" id="MF_00120"/>
    </source>
</evidence>
<feature type="chain" id="PRO_1000095123" description="Glutamyl-tRNA(Gln) amidotransferase subunit A">
    <location>
        <begin position="1"/>
        <end position="485"/>
    </location>
</feature>
<feature type="active site" description="Charge relay system" evidence="1">
    <location>
        <position position="79"/>
    </location>
</feature>
<feature type="active site" description="Charge relay system" evidence="1">
    <location>
        <position position="154"/>
    </location>
</feature>
<feature type="active site" description="Acyl-ester intermediate" evidence="1">
    <location>
        <position position="178"/>
    </location>
</feature>
<sequence>MDFTNYKAHELKDLISKKEVSVEEVTKAHLENVKNIDAKVNAFLYIAEEEALNDAKALDEKLSKGEDIGLLGGAPLGIKDNISVKNMQNTCASKILEGYISPYDATVSESVKSQGGVILGKLNMDEFAMGSSTENSAYKITRNPWDLDRVPGGSSGGSAAAVASKEVPLALGTDTGGSVRQPASFCGIVGLKPTYGRVSRSGVVAYGSTLDQVGTLGRDVKDCALLTQVISGVDHRDFTTANINVPNYENSLSENIKGKKIALPKEFFKDGLDPKVQKSIYDALEVFKANGAEITEVSLPLADYAISAYYLLACAEASSNLARFDGVRYGHRSESVEDAVDVYFKSRSEAFGKEVKKRIMLGTYALSAGYYDAYYKKALKVRNLIKGEFENIFKDFDAIISPTAPTPAYKIGEKTENALEMYLGDIYTVPVNIAGIPAISLPCGVADGLPVGLQIMGNYFKEDTLFNLAYSYEQSTKWHEMHPNL</sequence>
<reference key="1">
    <citation type="submission" date="2008-05" db="EMBL/GenBank/DDBJ databases">
        <title>Complete genome sequence of Clostridium botulinum E3 str. Alaska E43.</title>
        <authorList>
            <person name="Brinkac L.M."/>
            <person name="Brown J.L."/>
            <person name="Bruce D."/>
            <person name="Detter C."/>
            <person name="Munk C."/>
            <person name="Smith L.A."/>
            <person name="Smith T.J."/>
            <person name="Sutton G."/>
            <person name="Brettin T.S."/>
        </authorList>
    </citation>
    <scope>NUCLEOTIDE SEQUENCE [LARGE SCALE GENOMIC DNA]</scope>
    <source>
        <strain>Alaska E43 / Type E3</strain>
    </source>
</reference>
<proteinExistence type="inferred from homology"/>
<protein>
    <recommendedName>
        <fullName evidence="1">Glutamyl-tRNA(Gln) amidotransferase subunit A</fullName>
        <shortName evidence="1">Glu-ADT subunit A</shortName>
        <ecNumber evidence="1">6.3.5.7</ecNumber>
    </recommendedName>
</protein>
<organism>
    <name type="scientific">Clostridium botulinum (strain Alaska E43 / Type E3)</name>
    <dbReference type="NCBI Taxonomy" id="508767"/>
    <lineage>
        <taxon>Bacteria</taxon>
        <taxon>Bacillati</taxon>
        <taxon>Bacillota</taxon>
        <taxon>Clostridia</taxon>
        <taxon>Eubacteriales</taxon>
        <taxon>Clostridiaceae</taxon>
        <taxon>Clostridium</taxon>
    </lineage>
</organism>
<keyword id="KW-0067">ATP-binding</keyword>
<keyword id="KW-0436">Ligase</keyword>
<keyword id="KW-0547">Nucleotide-binding</keyword>
<keyword id="KW-0648">Protein biosynthesis</keyword>
<comment type="function">
    <text evidence="1">Allows the formation of correctly charged Gln-tRNA(Gln) through the transamidation of misacylated Glu-tRNA(Gln) in organisms which lack glutaminyl-tRNA synthetase. The reaction takes place in the presence of glutamine and ATP through an activated gamma-phospho-Glu-tRNA(Gln).</text>
</comment>
<comment type="catalytic activity">
    <reaction evidence="1">
        <text>L-glutamyl-tRNA(Gln) + L-glutamine + ATP + H2O = L-glutaminyl-tRNA(Gln) + L-glutamate + ADP + phosphate + H(+)</text>
        <dbReference type="Rhea" id="RHEA:17521"/>
        <dbReference type="Rhea" id="RHEA-COMP:9681"/>
        <dbReference type="Rhea" id="RHEA-COMP:9684"/>
        <dbReference type="ChEBI" id="CHEBI:15377"/>
        <dbReference type="ChEBI" id="CHEBI:15378"/>
        <dbReference type="ChEBI" id="CHEBI:29985"/>
        <dbReference type="ChEBI" id="CHEBI:30616"/>
        <dbReference type="ChEBI" id="CHEBI:43474"/>
        <dbReference type="ChEBI" id="CHEBI:58359"/>
        <dbReference type="ChEBI" id="CHEBI:78520"/>
        <dbReference type="ChEBI" id="CHEBI:78521"/>
        <dbReference type="ChEBI" id="CHEBI:456216"/>
        <dbReference type="EC" id="6.3.5.7"/>
    </reaction>
</comment>
<comment type="subunit">
    <text evidence="1">Heterotrimer of A, B and C subunits.</text>
</comment>
<comment type="similarity">
    <text evidence="1">Belongs to the amidase family. GatA subfamily.</text>
</comment>